<proteinExistence type="inferred from homology"/>
<sequence>MSEIKVGENETIESALRRFKRKCARAGVLSEVRKREHYEKPSVKRKKKSEAARKRKFK</sequence>
<protein>
    <recommendedName>
        <fullName evidence="1">Small ribosomal subunit protein bS21</fullName>
    </recommendedName>
    <alternativeName>
        <fullName evidence="3">30S ribosomal protein S21</fullName>
    </alternativeName>
</protein>
<accession>A5N6M8</accession>
<gene>
    <name evidence="1" type="primary">rpsU</name>
    <name type="ordered locus">CKL_0908</name>
</gene>
<dbReference type="EMBL" id="CP000673">
    <property type="protein sequence ID" value="EDK32959.1"/>
    <property type="molecule type" value="Genomic_DNA"/>
</dbReference>
<dbReference type="RefSeq" id="WP_007061146.1">
    <property type="nucleotide sequence ID" value="NC_009706.1"/>
</dbReference>
<dbReference type="SMR" id="A5N6M8"/>
<dbReference type="STRING" id="431943.CKL_0908"/>
<dbReference type="GeneID" id="29418189"/>
<dbReference type="KEGG" id="ckl:CKL_0908"/>
<dbReference type="eggNOG" id="COG0828">
    <property type="taxonomic scope" value="Bacteria"/>
</dbReference>
<dbReference type="HOGENOM" id="CLU_159258_1_2_9"/>
<dbReference type="Proteomes" id="UP000002411">
    <property type="component" value="Chromosome"/>
</dbReference>
<dbReference type="GO" id="GO:1990904">
    <property type="term" value="C:ribonucleoprotein complex"/>
    <property type="evidence" value="ECO:0007669"/>
    <property type="project" value="UniProtKB-KW"/>
</dbReference>
<dbReference type="GO" id="GO:0005840">
    <property type="term" value="C:ribosome"/>
    <property type="evidence" value="ECO:0007669"/>
    <property type="project" value="UniProtKB-KW"/>
</dbReference>
<dbReference type="GO" id="GO:0003735">
    <property type="term" value="F:structural constituent of ribosome"/>
    <property type="evidence" value="ECO:0007669"/>
    <property type="project" value="InterPro"/>
</dbReference>
<dbReference type="GO" id="GO:0006412">
    <property type="term" value="P:translation"/>
    <property type="evidence" value="ECO:0007669"/>
    <property type="project" value="UniProtKB-UniRule"/>
</dbReference>
<dbReference type="Gene3D" id="1.20.5.1150">
    <property type="entry name" value="Ribosomal protein S8"/>
    <property type="match status" value="1"/>
</dbReference>
<dbReference type="HAMAP" id="MF_00358">
    <property type="entry name" value="Ribosomal_bS21"/>
    <property type="match status" value="1"/>
</dbReference>
<dbReference type="InterPro" id="IPR001911">
    <property type="entry name" value="Ribosomal_bS21"/>
</dbReference>
<dbReference type="InterPro" id="IPR018278">
    <property type="entry name" value="Ribosomal_bS21_CS"/>
</dbReference>
<dbReference type="InterPro" id="IPR038380">
    <property type="entry name" value="Ribosomal_bS21_sf"/>
</dbReference>
<dbReference type="NCBIfam" id="TIGR00030">
    <property type="entry name" value="S21p"/>
    <property type="match status" value="1"/>
</dbReference>
<dbReference type="PANTHER" id="PTHR21109">
    <property type="entry name" value="MITOCHONDRIAL 28S RIBOSOMAL PROTEIN S21"/>
    <property type="match status" value="1"/>
</dbReference>
<dbReference type="PANTHER" id="PTHR21109:SF22">
    <property type="entry name" value="SMALL RIBOSOMAL SUBUNIT PROTEIN BS21"/>
    <property type="match status" value="1"/>
</dbReference>
<dbReference type="Pfam" id="PF01165">
    <property type="entry name" value="Ribosomal_S21"/>
    <property type="match status" value="1"/>
</dbReference>
<dbReference type="PRINTS" id="PR00976">
    <property type="entry name" value="RIBOSOMALS21"/>
</dbReference>
<dbReference type="PROSITE" id="PS01181">
    <property type="entry name" value="RIBOSOMAL_S21"/>
    <property type="match status" value="1"/>
</dbReference>
<name>RS21_CLOK5</name>
<comment type="similarity">
    <text evidence="1">Belongs to the bacterial ribosomal protein bS21 family.</text>
</comment>
<keyword id="KW-1185">Reference proteome</keyword>
<keyword id="KW-0687">Ribonucleoprotein</keyword>
<keyword id="KW-0689">Ribosomal protein</keyword>
<feature type="chain" id="PRO_1000079400" description="Small ribosomal subunit protein bS21">
    <location>
        <begin position="1"/>
        <end position="58"/>
    </location>
</feature>
<feature type="region of interest" description="Disordered" evidence="2">
    <location>
        <begin position="36"/>
        <end position="58"/>
    </location>
</feature>
<feature type="compositionally biased region" description="Basic residues" evidence="2">
    <location>
        <begin position="43"/>
        <end position="58"/>
    </location>
</feature>
<organism>
    <name type="scientific">Clostridium kluyveri (strain ATCC 8527 / DSM 555 / NBRC 12016 / NCIMB 10680 / K1)</name>
    <dbReference type="NCBI Taxonomy" id="431943"/>
    <lineage>
        <taxon>Bacteria</taxon>
        <taxon>Bacillati</taxon>
        <taxon>Bacillota</taxon>
        <taxon>Clostridia</taxon>
        <taxon>Eubacteriales</taxon>
        <taxon>Clostridiaceae</taxon>
        <taxon>Clostridium</taxon>
    </lineage>
</organism>
<evidence type="ECO:0000255" key="1">
    <source>
        <dbReference type="HAMAP-Rule" id="MF_00358"/>
    </source>
</evidence>
<evidence type="ECO:0000256" key="2">
    <source>
        <dbReference type="SAM" id="MobiDB-lite"/>
    </source>
</evidence>
<evidence type="ECO:0000305" key="3"/>
<reference key="1">
    <citation type="journal article" date="2008" name="Proc. Natl. Acad. Sci. U.S.A.">
        <title>The genome of Clostridium kluyveri, a strict anaerobe with unique metabolic features.</title>
        <authorList>
            <person name="Seedorf H."/>
            <person name="Fricke W.F."/>
            <person name="Veith B."/>
            <person name="Brueggemann H."/>
            <person name="Liesegang H."/>
            <person name="Strittmatter A."/>
            <person name="Miethke M."/>
            <person name="Buckel W."/>
            <person name="Hinderberger J."/>
            <person name="Li F."/>
            <person name="Hagemeier C."/>
            <person name="Thauer R.K."/>
            <person name="Gottschalk G."/>
        </authorList>
    </citation>
    <scope>NUCLEOTIDE SEQUENCE [LARGE SCALE GENOMIC DNA]</scope>
    <source>
        <strain>ATCC 8527 / DSM 555 / NBRC 12016 / NCIMB 10680 / K1</strain>
    </source>
</reference>